<feature type="chain" id="PRO_0000298832" description="NADH-quinone oxidoreductase subunit H">
    <location>
        <begin position="1"/>
        <end position="356"/>
    </location>
</feature>
<feature type="transmembrane region" description="Helical" evidence="1">
    <location>
        <begin position="18"/>
        <end position="38"/>
    </location>
</feature>
<feature type="transmembrane region" description="Helical" evidence="1">
    <location>
        <begin position="87"/>
        <end position="107"/>
    </location>
</feature>
<feature type="transmembrane region" description="Helical" evidence="1">
    <location>
        <begin position="120"/>
        <end position="140"/>
    </location>
</feature>
<feature type="transmembrane region" description="Helical" evidence="1">
    <location>
        <begin position="166"/>
        <end position="186"/>
    </location>
</feature>
<feature type="transmembrane region" description="Helical" evidence="1">
    <location>
        <begin position="202"/>
        <end position="222"/>
    </location>
</feature>
<feature type="transmembrane region" description="Helical" evidence="1">
    <location>
        <begin position="265"/>
        <end position="285"/>
    </location>
</feature>
<feature type="transmembrane region" description="Helical" evidence="1">
    <location>
        <begin position="292"/>
        <end position="312"/>
    </location>
</feature>
<feature type="transmembrane region" description="Helical" evidence="1">
    <location>
        <begin position="328"/>
        <end position="348"/>
    </location>
</feature>
<accession>Q1QL92</accession>
<comment type="function">
    <text evidence="1">NDH-1 shuttles electrons from NADH, via FMN and iron-sulfur (Fe-S) centers, to quinones in the respiratory chain. The immediate electron acceptor for the enzyme in this species is believed to be ubiquinone. Couples the redox reaction to proton translocation (for every two electrons transferred, four hydrogen ions are translocated across the cytoplasmic membrane), and thus conserves the redox energy in a proton gradient. This subunit may bind ubiquinone.</text>
</comment>
<comment type="catalytic activity">
    <reaction evidence="1">
        <text>a quinone + NADH + 5 H(+)(in) = a quinol + NAD(+) + 4 H(+)(out)</text>
        <dbReference type="Rhea" id="RHEA:57888"/>
        <dbReference type="ChEBI" id="CHEBI:15378"/>
        <dbReference type="ChEBI" id="CHEBI:24646"/>
        <dbReference type="ChEBI" id="CHEBI:57540"/>
        <dbReference type="ChEBI" id="CHEBI:57945"/>
        <dbReference type="ChEBI" id="CHEBI:132124"/>
    </reaction>
</comment>
<comment type="subunit">
    <text evidence="1">NDH-1 is composed of 14 different subunits. Subunits NuoA, H, J, K, L, M, N constitute the membrane sector of the complex.</text>
</comment>
<comment type="subcellular location">
    <subcellularLocation>
        <location evidence="1">Cell inner membrane</location>
        <topology evidence="1">Multi-pass membrane protein</topology>
    </subcellularLocation>
</comment>
<comment type="similarity">
    <text evidence="1">Belongs to the complex I subunit 1 family.</text>
</comment>
<keyword id="KW-0997">Cell inner membrane</keyword>
<keyword id="KW-1003">Cell membrane</keyword>
<keyword id="KW-0472">Membrane</keyword>
<keyword id="KW-0520">NAD</keyword>
<keyword id="KW-0874">Quinone</keyword>
<keyword id="KW-1185">Reference proteome</keyword>
<keyword id="KW-1278">Translocase</keyword>
<keyword id="KW-0812">Transmembrane</keyword>
<keyword id="KW-1133">Transmembrane helix</keyword>
<keyword id="KW-0830">Ubiquinone</keyword>
<protein>
    <recommendedName>
        <fullName evidence="1">NADH-quinone oxidoreductase subunit H</fullName>
        <ecNumber evidence="1">7.1.1.-</ecNumber>
    </recommendedName>
    <alternativeName>
        <fullName evidence="1">NADH dehydrogenase I subunit H</fullName>
    </alternativeName>
    <alternativeName>
        <fullName evidence="1">NDH-1 subunit H</fullName>
    </alternativeName>
</protein>
<dbReference type="EC" id="7.1.1.-" evidence="1"/>
<dbReference type="EMBL" id="CP000319">
    <property type="protein sequence ID" value="ABE63005.1"/>
    <property type="molecule type" value="Genomic_DNA"/>
</dbReference>
<dbReference type="RefSeq" id="WP_011510682.1">
    <property type="nucleotide sequence ID" value="NC_007964.1"/>
</dbReference>
<dbReference type="SMR" id="Q1QL92"/>
<dbReference type="STRING" id="323097.Nham_2213"/>
<dbReference type="KEGG" id="nha:Nham_2213"/>
<dbReference type="eggNOG" id="COG1005">
    <property type="taxonomic scope" value="Bacteria"/>
</dbReference>
<dbReference type="HOGENOM" id="CLU_015134_0_1_5"/>
<dbReference type="OrthoDB" id="9803734at2"/>
<dbReference type="Proteomes" id="UP000001953">
    <property type="component" value="Chromosome"/>
</dbReference>
<dbReference type="GO" id="GO:0005886">
    <property type="term" value="C:plasma membrane"/>
    <property type="evidence" value="ECO:0007669"/>
    <property type="project" value="UniProtKB-SubCell"/>
</dbReference>
<dbReference type="GO" id="GO:0003954">
    <property type="term" value="F:NADH dehydrogenase activity"/>
    <property type="evidence" value="ECO:0007669"/>
    <property type="project" value="TreeGrafter"/>
</dbReference>
<dbReference type="GO" id="GO:0016655">
    <property type="term" value="F:oxidoreductase activity, acting on NAD(P)H, quinone or similar compound as acceptor"/>
    <property type="evidence" value="ECO:0007669"/>
    <property type="project" value="UniProtKB-UniRule"/>
</dbReference>
<dbReference type="GO" id="GO:0048038">
    <property type="term" value="F:quinone binding"/>
    <property type="evidence" value="ECO:0007669"/>
    <property type="project" value="UniProtKB-KW"/>
</dbReference>
<dbReference type="GO" id="GO:0009060">
    <property type="term" value="P:aerobic respiration"/>
    <property type="evidence" value="ECO:0007669"/>
    <property type="project" value="TreeGrafter"/>
</dbReference>
<dbReference type="HAMAP" id="MF_01350">
    <property type="entry name" value="NDH1_NuoH"/>
    <property type="match status" value="1"/>
</dbReference>
<dbReference type="InterPro" id="IPR001694">
    <property type="entry name" value="NADH_UbQ_OxRdtase_su1/FPO"/>
</dbReference>
<dbReference type="InterPro" id="IPR018086">
    <property type="entry name" value="NADH_UbQ_OxRdtase_su1_CS"/>
</dbReference>
<dbReference type="NCBIfam" id="NF004745">
    <property type="entry name" value="PRK06076.1-6"/>
    <property type="match status" value="1"/>
</dbReference>
<dbReference type="PANTHER" id="PTHR11432">
    <property type="entry name" value="NADH DEHYDROGENASE SUBUNIT 1"/>
    <property type="match status" value="1"/>
</dbReference>
<dbReference type="PANTHER" id="PTHR11432:SF3">
    <property type="entry name" value="NADH-UBIQUINONE OXIDOREDUCTASE CHAIN 1"/>
    <property type="match status" value="1"/>
</dbReference>
<dbReference type="Pfam" id="PF00146">
    <property type="entry name" value="NADHdh"/>
    <property type="match status" value="1"/>
</dbReference>
<dbReference type="PROSITE" id="PS00668">
    <property type="entry name" value="COMPLEX1_ND1_2"/>
    <property type="match status" value="1"/>
</dbReference>
<evidence type="ECO:0000255" key="1">
    <source>
        <dbReference type="HAMAP-Rule" id="MF_01350"/>
    </source>
</evidence>
<name>NUOH_NITHX</name>
<proteinExistence type="inferred from homology"/>
<organism>
    <name type="scientific">Nitrobacter hamburgensis (strain DSM 10229 / NCIMB 13809 / X14)</name>
    <dbReference type="NCBI Taxonomy" id="323097"/>
    <lineage>
        <taxon>Bacteria</taxon>
        <taxon>Pseudomonadati</taxon>
        <taxon>Pseudomonadota</taxon>
        <taxon>Alphaproteobacteria</taxon>
        <taxon>Hyphomicrobiales</taxon>
        <taxon>Nitrobacteraceae</taxon>
        <taxon>Nitrobacter</taxon>
    </lineage>
</organism>
<reference key="1">
    <citation type="submission" date="2006-03" db="EMBL/GenBank/DDBJ databases">
        <title>Complete sequence of chromosome of Nitrobacter hamburgensis X14.</title>
        <authorList>
            <consortium name="US DOE Joint Genome Institute"/>
            <person name="Copeland A."/>
            <person name="Lucas S."/>
            <person name="Lapidus A."/>
            <person name="Barry K."/>
            <person name="Detter J.C."/>
            <person name="Glavina del Rio T."/>
            <person name="Hammon N."/>
            <person name="Israni S."/>
            <person name="Dalin E."/>
            <person name="Tice H."/>
            <person name="Pitluck S."/>
            <person name="Chain P."/>
            <person name="Malfatti S."/>
            <person name="Shin M."/>
            <person name="Vergez L."/>
            <person name="Schmutz J."/>
            <person name="Larimer F."/>
            <person name="Land M."/>
            <person name="Hauser L."/>
            <person name="Kyrpides N."/>
            <person name="Ivanova N."/>
            <person name="Ward B."/>
            <person name="Arp D."/>
            <person name="Klotz M."/>
            <person name="Stein L."/>
            <person name="O'Mullan G."/>
            <person name="Starkenburg S."/>
            <person name="Sayavedra L."/>
            <person name="Poret-Peterson A.T."/>
            <person name="Gentry M.E."/>
            <person name="Bruce D."/>
            <person name="Richardson P."/>
        </authorList>
    </citation>
    <scope>NUCLEOTIDE SEQUENCE [LARGE SCALE GENOMIC DNA]</scope>
    <source>
        <strain>DSM 10229 / NCIMB 13809 / X14</strain>
    </source>
</reference>
<sequence length="356" mass="39511">MAEFFAAPFWTDFLWPLIVMVAQSVLLLVVLLIAIAYILLADRKIWAAVQIRRGPNVVGPWGLLQSFADLLKFVLKEPIIPSGSNKGVFLLAPLVTCVLALAAWAVIPVNLNWVISDINVGILYIFAISSLSIYGIIMAGWSSNSKYPFLAALRSAAQMVSYEVSIGFVFITVLLCAGSLNLSAIVEAQHVRGLGSLIGLPWLTFLNWYWLPLLPMFVVFYVSALAETNRPPFDLVEAESELVAGFMVEYGSTPYLLFMLGEYVAITTMCAMGAILFMGGWLPPIDLPPFNWVPGVIWFSLKLFFMFFLFAMAKAIVPRYRYDQLMRLGWKVFLPLSLAMVVIVAGVLQFADIAPK</sequence>
<gene>
    <name evidence="1" type="primary">nuoH</name>
    <name type="ordered locus">Nham_2213</name>
</gene>